<sequence>MAAFASGLAIIFNSPSLNPVTTQATFLSSNRIRSSPRVFSGFHSLRRRGFRRFSQNVIPDRFNSFSCNCLSAVSTSTIDYEFTDGGKEVELRLRLKTGEILSPKDISVDADGTSLAVKEKRNGLLITLLETNHLFEKIMPSETIWYIDEDQLVVNMKKVDGELKWPDIVESWESLTAGMMQLLKGASIYIVGDSTEINQKVSRELAVGLGYSPLDSKELLESFSKQTIDSWILAEGPDSVAEAESSVLESLSSHVRTVVSTLGGKHGAAGRADQWRHLYSGFTVWVSQTEATDEESAKEEARRSKQEREIGYSNADVVVKLQGWDPTHAKSVAQASLSALKQLIISDKGLPGKKSLYIRLGCRGDWPNIKPPGWDPSSDTGPHPQFT</sequence>
<evidence type="ECO:0000255" key="1"/>
<evidence type="ECO:0000256" key="2">
    <source>
        <dbReference type="SAM" id="MobiDB-lite"/>
    </source>
</evidence>
<evidence type="ECO:0000305" key="3"/>
<evidence type="ECO:0000305" key="4">
    <source>
    </source>
</evidence>
<accession>O82290</accession>
<accession>Q945M6</accession>
<proteinExistence type="evidence at transcript level"/>
<feature type="transit peptide" description="Chloroplast" evidence="1">
    <location>
        <begin position="1"/>
        <end position="71"/>
    </location>
</feature>
<feature type="chain" id="PRO_0000421112" description="Probable inactive shikimate kinase like 2, chloroplastic">
    <location>
        <begin position="72"/>
        <end position="387"/>
    </location>
</feature>
<feature type="region of interest" description="Disordered" evidence="2">
    <location>
        <begin position="368"/>
        <end position="387"/>
    </location>
</feature>
<name>SKL2_ARATH</name>
<comment type="subcellular location">
    <subcellularLocation>
        <location evidence="3">Plastid</location>
        <location evidence="3">Chloroplast</location>
    </subcellularLocation>
</comment>
<comment type="similarity">
    <text evidence="3">Belongs to the shikimate kinase family.</text>
</comment>
<comment type="caution">
    <text evidence="4">SKL2 does not possess shikimate kinase activity in vitro probably because it lacks the conserved active sites and substrate binding sites of the shikimate kinase family.</text>
</comment>
<dbReference type="EMBL" id="AC005314">
    <property type="protein sequence ID" value="AAC36171.2"/>
    <property type="molecule type" value="Genomic_DNA"/>
</dbReference>
<dbReference type="EMBL" id="CP002685">
    <property type="protein sequence ID" value="AEC09114.1"/>
    <property type="molecule type" value="Genomic_DNA"/>
</dbReference>
<dbReference type="EMBL" id="AF412061">
    <property type="protein sequence ID" value="AAL06514.1"/>
    <property type="molecule type" value="mRNA"/>
</dbReference>
<dbReference type="EMBL" id="AY074560">
    <property type="protein sequence ID" value="AAL67100.1"/>
    <property type="molecule type" value="mRNA"/>
</dbReference>
<dbReference type="PIR" id="D84769">
    <property type="entry name" value="D84769"/>
</dbReference>
<dbReference type="RefSeq" id="NP_565805.1">
    <property type="nucleotide sequence ID" value="NM_129102.4"/>
</dbReference>
<dbReference type="SMR" id="O82290"/>
<dbReference type="BioGRID" id="3461">
    <property type="interactions" value="8"/>
</dbReference>
<dbReference type="FunCoup" id="O82290">
    <property type="interactions" value="1415"/>
</dbReference>
<dbReference type="IntAct" id="O82290">
    <property type="interactions" value="11"/>
</dbReference>
<dbReference type="STRING" id="3702.O82290"/>
<dbReference type="iPTMnet" id="O82290"/>
<dbReference type="PaxDb" id="3702-AT2G35500.1"/>
<dbReference type="ProteomicsDB" id="232561"/>
<dbReference type="EnsemblPlants" id="AT2G35500.1">
    <property type="protein sequence ID" value="AT2G35500.1"/>
    <property type="gene ID" value="AT2G35500"/>
</dbReference>
<dbReference type="GeneID" id="818115"/>
<dbReference type="Gramene" id="AT2G35500.1">
    <property type="protein sequence ID" value="AT2G35500.1"/>
    <property type="gene ID" value="AT2G35500"/>
</dbReference>
<dbReference type="KEGG" id="ath:AT2G35500"/>
<dbReference type="Araport" id="AT2G35500"/>
<dbReference type="TAIR" id="AT2G35500">
    <property type="gene designation" value="SKL2"/>
</dbReference>
<dbReference type="eggNOG" id="ENOG502QS29">
    <property type="taxonomic scope" value="Eukaryota"/>
</dbReference>
<dbReference type="HOGENOM" id="CLU_050606_1_0_1"/>
<dbReference type="InParanoid" id="O82290"/>
<dbReference type="OMA" id="FSCNCLS"/>
<dbReference type="PhylomeDB" id="O82290"/>
<dbReference type="PRO" id="PR:O82290"/>
<dbReference type="Proteomes" id="UP000006548">
    <property type="component" value="Chromosome 2"/>
</dbReference>
<dbReference type="ExpressionAtlas" id="O82290">
    <property type="expression patterns" value="baseline and differential"/>
</dbReference>
<dbReference type="GO" id="GO:0009507">
    <property type="term" value="C:chloroplast"/>
    <property type="evidence" value="ECO:0007005"/>
    <property type="project" value="TAIR"/>
</dbReference>
<dbReference type="GO" id="GO:0006950">
    <property type="term" value="P:response to stress"/>
    <property type="evidence" value="ECO:0007669"/>
    <property type="project" value="UniProtKB-ARBA"/>
</dbReference>
<dbReference type="CDD" id="cd06467">
    <property type="entry name" value="p23_NUDC_like"/>
    <property type="match status" value="1"/>
</dbReference>
<dbReference type="FunFam" id="2.60.40.790:FF:000050">
    <property type="entry name" value="Probable inactive shikimate kinase like 2, chloroplastic"/>
    <property type="match status" value="1"/>
</dbReference>
<dbReference type="FunFam" id="3.40.50.300:FF:001340">
    <property type="entry name" value="Probable inactive shikimate kinase like 2, chloroplastic"/>
    <property type="match status" value="1"/>
</dbReference>
<dbReference type="Gene3D" id="2.60.40.790">
    <property type="match status" value="1"/>
</dbReference>
<dbReference type="Gene3D" id="3.40.50.300">
    <property type="entry name" value="P-loop containing nucleotide triphosphate hydrolases"/>
    <property type="match status" value="1"/>
</dbReference>
<dbReference type="InterPro" id="IPR007052">
    <property type="entry name" value="CS_dom"/>
</dbReference>
<dbReference type="InterPro" id="IPR008978">
    <property type="entry name" value="HSP20-like_chaperone"/>
</dbReference>
<dbReference type="InterPro" id="IPR027417">
    <property type="entry name" value="P-loop_NTPase"/>
</dbReference>
<dbReference type="InterPro" id="IPR031322">
    <property type="entry name" value="Shikimate/glucono_kinase"/>
</dbReference>
<dbReference type="PANTHER" id="PTHR21087:SF23">
    <property type="entry name" value="INACTIVE SHIKIMATE KINASE LIKE 2, CHLOROPLASTIC-RELATED"/>
    <property type="match status" value="1"/>
</dbReference>
<dbReference type="PANTHER" id="PTHR21087">
    <property type="entry name" value="SHIKIMATE KINASE"/>
    <property type="match status" value="1"/>
</dbReference>
<dbReference type="Pfam" id="PF01202">
    <property type="entry name" value="SKI"/>
    <property type="match status" value="1"/>
</dbReference>
<dbReference type="SUPFAM" id="SSF49764">
    <property type="entry name" value="HSP20-like chaperones"/>
    <property type="match status" value="1"/>
</dbReference>
<reference key="1">
    <citation type="journal article" date="1999" name="Nature">
        <title>Sequence and analysis of chromosome 2 of the plant Arabidopsis thaliana.</title>
        <authorList>
            <person name="Lin X."/>
            <person name="Kaul S."/>
            <person name="Rounsley S.D."/>
            <person name="Shea T.P."/>
            <person name="Benito M.-I."/>
            <person name="Town C.D."/>
            <person name="Fujii C.Y."/>
            <person name="Mason T.M."/>
            <person name="Bowman C.L."/>
            <person name="Barnstead M.E."/>
            <person name="Feldblyum T.V."/>
            <person name="Buell C.R."/>
            <person name="Ketchum K.A."/>
            <person name="Lee J.J."/>
            <person name="Ronning C.M."/>
            <person name="Koo H.L."/>
            <person name="Moffat K.S."/>
            <person name="Cronin L.A."/>
            <person name="Shen M."/>
            <person name="Pai G."/>
            <person name="Van Aken S."/>
            <person name="Umayam L."/>
            <person name="Tallon L.J."/>
            <person name="Gill J.E."/>
            <person name="Adams M.D."/>
            <person name="Carrera A.J."/>
            <person name="Creasy T.H."/>
            <person name="Goodman H.M."/>
            <person name="Somerville C.R."/>
            <person name="Copenhaver G.P."/>
            <person name="Preuss D."/>
            <person name="Nierman W.C."/>
            <person name="White O."/>
            <person name="Eisen J.A."/>
            <person name="Salzberg S.L."/>
            <person name="Fraser C.M."/>
            <person name="Venter J.C."/>
        </authorList>
    </citation>
    <scope>NUCLEOTIDE SEQUENCE [LARGE SCALE GENOMIC DNA]</scope>
    <source>
        <strain>cv. Columbia</strain>
    </source>
</reference>
<reference key="2">
    <citation type="journal article" date="2017" name="Plant J.">
        <title>Araport11: a complete reannotation of the Arabidopsis thaliana reference genome.</title>
        <authorList>
            <person name="Cheng C.Y."/>
            <person name="Krishnakumar V."/>
            <person name="Chan A.P."/>
            <person name="Thibaud-Nissen F."/>
            <person name="Schobel S."/>
            <person name="Town C.D."/>
        </authorList>
    </citation>
    <scope>GENOME REANNOTATION</scope>
    <source>
        <strain>cv. Columbia</strain>
    </source>
</reference>
<reference key="3">
    <citation type="journal article" date="2003" name="Science">
        <title>Empirical analysis of transcriptional activity in the Arabidopsis genome.</title>
        <authorList>
            <person name="Yamada K."/>
            <person name="Lim J."/>
            <person name="Dale J.M."/>
            <person name="Chen H."/>
            <person name="Shinn P."/>
            <person name="Palm C.J."/>
            <person name="Southwick A.M."/>
            <person name="Wu H.C."/>
            <person name="Kim C.J."/>
            <person name="Nguyen M."/>
            <person name="Pham P.K."/>
            <person name="Cheuk R.F."/>
            <person name="Karlin-Newmann G."/>
            <person name="Liu S.X."/>
            <person name="Lam B."/>
            <person name="Sakano H."/>
            <person name="Wu T."/>
            <person name="Yu G."/>
            <person name="Miranda M."/>
            <person name="Quach H.L."/>
            <person name="Tripp M."/>
            <person name="Chang C.H."/>
            <person name="Lee J.M."/>
            <person name="Toriumi M.J."/>
            <person name="Chan M.M."/>
            <person name="Tang C.C."/>
            <person name="Onodera C.S."/>
            <person name="Deng J.M."/>
            <person name="Akiyama K."/>
            <person name="Ansari Y."/>
            <person name="Arakawa T."/>
            <person name="Banh J."/>
            <person name="Banno F."/>
            <person name="Bowser L."/>
            <person name="Brooks S.Y."/>
            <person name="Carninci P."/>
            <person name="Chao Q."/>
            <person name="Choy N."/>
            <person name="Enju A."/>
            <person name="Goldsmith A.D."/>
            <person name="Gurjal M."/>
            <person name="Hansen N.F."/>
            <person name="Hayashizaki Y."/>
            <person name="Johnson-Hopson C."/>
            <person name="Hsuan V.W."/>
            <person name="Iida K."/>
            <person name="Karnes M."/>
            <person name="Khan S."/>
            <person name="Koesema E."/>
            <person name="Ishida J."/>
            <person name="Jiang P.X."/>
            <person name="Jones T."/>
            <person name="Kawai J."/>
            <person name="Kamiya A."/>
            <person name="Meyers C."/>
            <person name="Nakajima M."/>
            <person name="Narusaka M."/>
            <person name="Seki M."/>
            <person name="Sakurai T."/>
            <person name="Satou M."/>
            <person name="Tamse R."/>
            <person name="Vaysberg M."/>
            <person name="Wallender E.K."/>
            <person name="Wong C."/>
            <person name="Yamamura Y."/>
            <person name="Yuan S."/>
            <person name="Shinozaki K."/>
            <person name="Davis R.W."/>
            <person name="Theologis A."/>
            <person name="Ecker J.R."/>
        </authorList>
    </citation>
    <scope>NUCLEOTIDE SEQUENCE [LARGE SCALE MRNA]</scope>
    <source>
        <strain>cv. Columbia</strain>
    </source>
</reference>
<reference key="4">
    <citation type="journal article" date="2008" name="PLoS Genet.">
        <title>Evolutionary diversification of plant shikimate kinase gene duplicates.</title>
        <authorList>
            <person name="Fucile G."/>
            <person name="Falconer S."/>
            <person name="Christendat D."/>
        </authorList>
    </citation>
    <scope>GENE FAMILY</scope>
    <scope>NOMENCLATURE</scope>
</reference>
<protein>
    <recommendedName>
        <fullName>Probable inactive shikimate kinase like 2, chloroplastic</fullName>
        <shortName>AtSKL2</shortName>
    </recommendedName>
</protein>
<gene>
    <name type="primary">SKL2</name>
    <name type="ordered locus">At2g35500</name>
    <name type="ORF">T32F12.12</name>
</gene>
<keyword id="KW-0150">Chloroplast</keyword>
<keyword id="KW-0934">Plastid</keyword>
<keyword id="KW-1185">Reference proteome</keyword>
<keyword id="KW-0809">Transit peptide</keyword>
<organism>
    <name type="scientific">Arabidopsis thaliana</name>
    <name type="common">Mouse-ear cress</name>
    <dbReference type="NCBI Taxonomy" id="3702"/>
    <lineage>
        <taxon>Eukaryota</taxon>
        <taxon>Viridiplantae</taxon>
        <taxon>Streptophyta</taxon>
        <taxon>Embryophyta</taxon>
        <taxon>Tracheophyta</taxon>
        <taxon>Spermatophyta</taxon>
        <taxon>Magnoliopsida</taxon>
        <taxon>eudicotyledons</taxon>
        <taxon>Gunneridae</taxon>
        <taxon>Pentapetalae</taxon>
        <taxon>rosids</taxon>
        <taxon>malvids</taxon>
        <taxon>Brassicales</taxon>
        <taxon>Brassicaceae</taxon>
        <taxon>Camelineae</taxon>
        <taxon>Arabidopsis</taxon>
    </lineage>
</organism>